<feature type="chain" id="PRO_0000433320" description="Protein C2-DOMAIN ABA-RELATED 10">
    <location>
        <begin position="1"/>
        <end position="180"/>
    </location>
</feature>
<feature type="domain" description="C2" evidence="3">
    <location>
        <begin position="1"/>
        <end position="105"/>
    </location>
</feature>
<feature type="binding site" evidence="2">
    <location>
        <position position="22"/>
    </location>
    <ligand>
        <name>Ca(2+)</name>
        <dbReference type="ChEBI" id="CHEBI:29108"/>
        <label>1</label>
    </ligand>
</feature>
<feature type="binding site" evidence="2">
    <location>
        <position position="23"/>
    </location>
    <ligand>
        <name>Ca(2+)</name>
        <dbReference type="ChEBI" id="CHEBI:29108"/>
        <label>1</label>
    </ligand>
</feature>
<feature type="binding site" evidence="2">
    <location>
        <position position="23"/>
    </location>
    <ligand>
        <name>Ca(2+)</name>
        <dbReference type="ChEBI" id="CHEBI:29108"/>
        <label>2</label>
    </ligand>
</feature>
<feature type="binding site" evidence="2">
    <location>
        <position position="28"/>
    </location>
    <ligand>
        <name>Ca(2+)</name>
        <dbReference type="ChEBI" id="CHEBI:29108"/>
        <label>2</label>
    </ligand>
</feature>
<feature type="binding site" evidence="2">
    <location>
        <position position="74"/>
    </location>
    <ligand>
        <name>Ca(2+)</name>
        <dbReference type="ChEBI" id="CHEBI:29108"/>
        <label>1</label>
    </ligand>
</feature>
<feature type="binding site" evidence="2">
    <location>
        <position position="74"/>
    </location>
    <ligand>
        <name>Ca(2+)</name>
        <dbReference type="ChEBI" id="CHEBI:29108"/>
        <label>2</label>
    </ligand>
</feature>
<feature type="binding site" evidence="2">
    <location>
        <position position="75"/>
    </location>
    <ligand>
        <name>Ca(2+)</name>
        <dbReference type="ChEBI" id="CHEBI:29108"/>
        <label>2</label>
    </ligand>
</feature>
<feature type="binding site" evidence="2">
    <location>
        <position position="76"/>
    </location>
    <ligand>
        <name>Ca(2+)</name>
        <dbReference type="ChEBI" id="CHEBI:29108"/>
        <label>1</label>
    </ligand>
</feature>
<feature type="binding site" evidence="2">
    <location>
        <position position="76"/>
    </location>
    <ligand>
        <name>Ca(2+)</name>
        <dbReference type="ChEBI" id="CHEBI:29108"/>
        <label>2</label>
    </ligand>
</feature>
<feature type="binding site" evidence="2">
    <location>
        <position position="82"/>
    </location>
    <ligand>
        <name>Ca(2+)</name>
        <dbReference type="ChEBI" id="CHEBI:29108"/>
        <label>1</label>
    </ligand>
</feature>
<reference key="1">
    <citation type="journal article" date="1999" name="Nature">
        <title>Sequence and analysis of chromosome 2 of the plant Arabidopsis thaliana.</title>
        <authorList>
            <person name="Lin X."/>
            <person name="Kaul S."/>
            <person name="Rounsley S.D."/>
            <person name="Shea T.P."/>
            <person name="Benito M.-I."/>
            <person name="Town C.D."/>
            <person name="Fujii C.Y."/>
            <person name="Mason T.M."/>
            <person name="Bowman C.L."/>
            <person name="Barnstead M.E."/>
            <person name="Feldblyum T.V."/>
            <person name="Buell C.R."/>
            <person name="Ketchum K.A."/>
            <person name="Lee J.J."/>
            <person name="Ronning C.M."/>
            <person name="Koo H.L."/>
            <person name="Moffat K.S."/>
            <person name="Cronin L.A."/>
            <person name="Shen M."/>
            <person name="Pai G."/>
            <person name="Van Aken S."/>
            <person name="Umayam L."/>
            <person name="Tallon L.J."/>
            <person name="Gill J.E."/>
            <person name="Adams M.D."/>
            <person name="Carrera A.J."/>
            <person name="Creasy T.H."/>
            <person name="Goodman H.M."/>
            <person name="Somerville C.R."/>
            <person name="Copenhaver G.P."/>
            <person name="Preuss D."/>
            <person name="Nierman W.C."/>
            <person name="White O."/>
            <person name="Eisen J.A."/>
            <person name="Salzberg S.L."/>
            <person name="Fraser C.M."/>
            <person name="Venter J.C."/>
        </authorList>
    </citation>
    <scope>NUCLEOTIDE SEQUENCE [LARGE SCALE GENOMIC DNA]</scope>
    <source>
        <strain>cv. Columbia</strain>
    </source>
</reference>
<reference key="2">
    <citation type="journal article" date="2017" name="Plant J.">
        <title>Araport11: a complete reannotation of the Arabidopsis thaliana reference genome.</title>
        <authorList>
            <person name="Cheng C.Y."/>
            <person name="Krishnakumar V."/>
            <person name="Chan A.P."/>
            <person name="Thibaud-Nissen F."/>
            <person name="Schobel S."/>
            <person name="Town C.D."/>
        </authorList>
    </citation>
    <scope>GENOME REANNOTATION</scope>
    <source>
        <strain>cv. Columbia</strain>
    </source>
</reference>
<reference key="3">
    <citation type="journal article" date="2003" name="Science">
        <title>Empirical analysis of transcriptional activity in the Arabidopsis genome.</title>
        <authorList>
            <person name="Yamada K."/>
            <person name="Lim J."/>
            <person name="Dale J.M."/>
            <person name="Chen H."/>
            <person name="Shinn P."/>
            <person name="Palm C.J."/>
            <person name="Southwick A.M."/>
            <person name="Wu H.C."/>
            <person name="Kim C.J."/>
            <person name="Nguyen M."/>
            <person name="Pham P.K."/>
            <person name="Cheuk R.F."/>
            <person name="Karlin-Newmann G."/>
            <person name="Liu S.X."/>
            <person name="Lam B."/>
            <person name="Sakano H."/>
            <person name="Wu T."/>
            <person name="Yu G."/>
            <person name="Miranda M."/>
            <person name="Quach H.L."/>
            <person name="Tripp M."/>
            <person name="Chang C.H."/>
            <person name="Lee J.M."/>
            <person name="Toriumi M.J."/>
            <person name="Chan M.M."/>
            <person name="Tang C.C."/>
            <person name="Onodera C.S."/>
            <person name="Deng J.M."/>
            <person name="Akiyama K."/>
            <person name="Ansari Y."/>
            <person name="Arakawa T."/>
            <person name="Banh J."/>
            <person name="Banno F."/>
            <person name="Bowser L."/>
            <person name="Brooks S.Y."/>
            <person name="Carninci P."/>
            <person name="Chao Q."/>
            <person name="Choy N."/>
            <person name="Enju A."/>
            <person name="Goldsmith A.D."/>
            <person name="Gurjal M."/>
            <person name="Hansen N.F."/>
            <person name="Hayashizaki Y."/>
            <person name="Johnson-Hopson C."/>
            <person name="Hsuan V.W."/>
            <person name="Iida K."/>
            <person name="Karnes M."/>
            <person name="Khan S."/>
            <person name="Koesema E."/>
            <person name="Ishida J."/>
            <person name="Jiang P.X."/>
            <person name="Jones T."/>
            <person name="Kawai J."/>
            <person name="Kamiya A."/>
            <person name="Meyers C."/>
            <person name="Nakajima M."/>
            <person name="Narusaka M."/>
            <person name="Seki M."/>
            <person name="Sakurai T."/>
            <person name="Satou M."/>
            <person name="Tamse R."/>
            <person name="Vaysberg M."/>
            <person name="Wallender E.K."/>
            <person name="Wong C."/>
            <person name="Yamamura Y."/>
            <person name="Yuan S."/>
            <person name="Shinozaki K."/>
            <person name="Davis R.W."/>
            <person name="Theologis A."/>
            <person name="Ecker J.R."/>
        </authorList>
    </citation>
    <scope>NUCLEOTIDE SEQUENCE [LARGE SCALE MRNA]</scope>
    <source>
        <strain>cv. Columbia</strain>
    </source>
</reference>
<reference key="4">
    <citation type="journal article" date="2014" name="Plant Cell">
        <title>C2-domain abscisic acid-related proteins mediate the interaction of PYR/PYL/RCAR abscisic acid receptors with the plasma membrane and regulate abscisic acid sensitivity in Arabidopsis.</title>
        <authorList>
            <person name="Rodriguez L."/>
            <person name="Gonzalez-Guzman M."/>
            <person name="Diaz M."/>
            <person name="Rodrigues A."/>
            <person name="Izquierdo-Garcia A.C."/>
            <person name="Peirats-Llobet M."/>
            <person name="Fernandez M.A."/>
            <person name="Antoni R."/>
            <person name="Fernandez D."/>
            <person name="Marquez J.A."/>
            <person name="Mulet J.M."/>
            <person name="Albert A."/>
            <person name="Rodriguez P.L."/>
        </authorList>
    </citation>
    <scope>GENE FAMILY</scope>
    <scope>NOMENCLATURE</scope>
</reference>
<keyword id="KW-0938">Abscisic acid signaling pathway</keyword>
<keyword id="KW-0106">Calcium</keyword>
<keyword id="KW-1003">Cell membrane</keyword>
<keyword id="KW-0343">GTPase activation</keyword>
<keyword id="KW-0446">Lipid-binding</keyword>
<keyword id="KW-0472">Membrane</keyword>
<keyword id="KW-0479">Metal-binding</keyword>
<keyword id="KW-0539">Nucleus</keyword>
<keyword id="KW-1185">Reference proteome</keyword>
<name>CAR10_ARATH</name>
<evidence type="ECO:0000250" key="1">
    <source>
        <dbReference type="UniProtKB" id="Q9FHP6"/>
    </source>
</evidence>
<evidence type="ECO:0000250" key="2">
    <source>
        <dbReference type="UniProtKB" id="Q9LVH4"/>
    </source>
</evidence>
<evidence type="ECO:0000255" key="3">
    <source>
        <dbReference type="PROSITE-ProRule" id="PRU00041"/>
    </source>
</evidence>
<evidence type="ECO:0000303" key="4">
    <source>
    </source>
</evidence>
<evidence type="ECO:0000305" key="5">
    <source>
    </source>
</evidence>
<evidence type="ECO:0000312" key="6">
    <source>
        <dbReference type="Araport" id="AT2G01540"/>
    </source>
</evidence>
<evidence type="ECO:0000312" key="7">
    <source>
        <dbReference type="EMBL" id="AAC67330.1"/>
    </source>
</evidence>
<evidence type="ECO:0000312" key="8">
    <source>
        <dbReference type="Proteomes" id="UP000006548"/>
    </source>
</evidence>
<proteinExistence type="evidence at transcript level"/>
<accession>Q9ZVF1</accession>
<sequence>MDQKPLGLLTIHVKRGINLAIRDHRSSDPYIVLNVADQTLKTRVVKKNCNPVWNEEMTVAIKDPNVPIRLTVFDWDKFTGDDKMGDANIDIQPYLEALKMGMELLRLPNGCAIKRVQPSRHNCLSDESSIVWNNGKITQDLILRLNNVECGEIEIMLEWHEGAGCRGITSSSKGGGSSST</sequence>
<comment type="function">
    <text evidence="1 2">Stimulates the GTPase/ATPase activities of Obg-like ATPases (By similarity). Mediates the transient calcium-dependent interaction of PYR/PYL/RCAR abscisic acid (ABA) receptors with the plasma membrane and thus regulates ABA sensitivity (By similarity).</text>
</comment>
<comment type="subunit">
    <text evidence="1">Binds to PYR/PYL/RCAR abscisic acid intracellular receptors in an ABA-independent manner, both at the plasma membrane and in the nucleus.</text>
</comment>
<comment type="subcellular location">
    <subcellularLocation>
        <location evidence="1">Cell membrane</location>
    </subcellularLocation>
    <subcellularLocation>
        <location evidence="1">Nucleus</location>
    </subcellularLocation>
</comment>
<comment type="similarity">
    <text evidence="5">Belongs to the plant CAR protein family.</text>
</comment>
<organism evidence="8">
    <name type="scientific">Arabidopsis thaliana</name>
    <name type="common">Mouse-ear cress</name>
    <dbReference type="NCBI Taxonomy" id="3702"/>
    <lineage>
        <taxon>Eukaryota</taxon>
        <taxon>Viridiplantae</taxon>
        <taxon>Streptophyta</taxon>
        <taxon>Embryophyta</taxon>
        <taxon>Tracheophyta</taxon>
        <taxon>Spermatophyta</taxon>
        <taxon>Magnoliopsida</taxon>
        <taxon>eudicotyledons</taxon>
        <taxon>Gunneridae</taxon>
        <taxon>Pentapetalae</taxon>
        <taxon>rosids</taxon>
        <taxon>malvids</taxon>
        <taxon>Brassicales</taxon>
        <taxon>Brassicaceae</taxon>
        <taxon>Camelineae</taxon>
        <taxon>Arabidopsis</taxon>
    </lineage>
</organism>
<gene>
    <name evidence="4" type="primary">CAR10</name>
    <name evidence="6" type="ordered locus">At2g01540</name>
    <name evidence="7" type="ORF">F2I9.16</name>
</gene>
<dbReference type="EMBL" id="AC005560">
    <property type="protein sequence ID" value="AAC67330.1"/>
    <property type="molecule type" value="Genomic_DNA"/>
</dbReference>
<dbReference type="EMBL" id="CP002685">
    <property type="protein sequence ID" value="AEC05466.1"/>
    <property type="molecule type" value="Genomic_DNA"/>
</dbReference>
<dbReference type="EMBL" id="AY062604">
    <property type="protein sequence ID" value="AAL32682.1"/>
    <property type="molecule type" value="mRNA"/>
</dbReference>
<dbReference type="EMBL" id="AY093363">
    <property type="protein sequence ID" value="AAM13362.1"/>
    <property type="molecule type" value="mRNA"/>
</dbReference>
<dbReference type="PIR" id="A84426">
    <property type="entry name" value="A84426"/>
</dbReference>
<dbReference type="RefSeq" id="NP_178263.1">
    <property type="nucleotide sequence ID" value="NM_126215.5"/>
</dbReference>
<dbReference type="SMR" id="Q9ZVF1"/>
<dbReference type="FunCoup" id="Q9ZVF1">
    <property type="interactions" value="228"/>
</dbReference>
<dbReference type="IntAct" id="Q9ZVF1">
    <property type="interactions" value="3"/>
</dbReference>
<dbReference type="STRING" id="3702.Q9ZVF1"/>
<dbReference type="PaxDb" id="3702-AT2G01540.1"/>
<dbReference type="ProteomicsDB" id="239193"/>
<dbReference type="EnsemblPlants" id="AT2G01540.1">
    <property type="protein sequence ID" value="AT2G01540.1"/>
    <property type="gene ID" value="AT2G01540"/>
</dbReference>
<dbReference type="GeneID" id="814683"/>
<dbReference type="Gramene" id="AT2G01540.1">
    <property type="protein sequence ID" value="AT2G01540.1"/>
    <property type="gene ID" value="AT2G01540"/>
</dbReference>
<dbReference type="KEGG" id="ath:AT2G01540"/>
<dbReference type="Araport" id="AT2G01540"/>
<dbReference type="TAIR" id="AT2G01540">
    <property type="gene designation" value="CAR10"/>
</dbReference>
<dbReference type="eggNOG" id="KOG1030">
    <property type="taxonomic scope" value="Eukaryota"/>
</dbReference>
<dbReference type="HOGENOM" id="CLU_106037_0_0_1"/>
<dbReference type="InParanoid" id="Q9ZVF1"/>
<dbReference type="OMA" id="ENCNPVW"/>
<dbReference type="OrthoDB" id="73919at2759"/>
<dbReference type="PhylomeDB" id="Q9ZVF1"/>
<dbReference type="PRO" id="PR:Q9ZVF1"/>
<dbReference type="Proteomes" id="UP000006548">
    <property type="component" value="Chromosome 2"/>
</dbReference>
<dbReference type="ExpressionAtlas" id="Q9ZVF1">
    <property type="expression patterns" value="baseline and differential"/>
</dbReference>
<dbReference type="GO" id="GO:0005634">
    <property type="term" value="C:nucleus"/>
    <property type="evidence" value="ECO:0000250"/>
    <property type="project" value="UniProtKB"/>
</dbReference>
<dbReference type="GO" id="GO:0000325">
    <property type="term" value="C:plant-type vacuole"/>
    <property type="evidence" value="ECO:0007005"/>
    <property type="project" value="TAIR"/>
</dbReference>
<dbReference type="GO" id="GO:0005886">
    <property type="term" value="C:plasma membrane"/>
    <property type="evidence" value="ECO:0007005"/>
    <property type="project" value="TAIR"/>
</dbReference>
<dbReference type="GO" id="GO:0005096">
    <property type="term" value="F:GTPase activator activity"/>
    <property type="evidence" value="ECO:0000250"/>
    <property type="project" value="UniProtKB"/>
</dbReference>
<dbReference type="GO" id="GO:0046872">
    <property type="term" value="F:metal ion binding"/>
    <property type="evidence" value="ECO:0007669"/>
    <property type="project" value="UniProtKB-KW"/>
</dbReference>
<dbReference type="GO" id="GO:0005543">
    <property type="term" value="F:phospholipid binding"/>
    <property type="evidence" value="ECO:0000250"/>
    <property type="project" value="UniProtKB"/>
</dbReference>
<dbReference type="GO" id="GO:0009738">
    <property type="term" value="P:abscisic acid-activated signaling pathway"/>
    <property type="evidence" value="ECO:0007669"/>
    <property type="project" value="UniProtKB-KW"/>
</dbReference>
<dbReference type="GO" id="GO:0009789">
    <property type="term" value="P:positive regulation of abscisic acid-activated signaling pathway"/>
    <property type="evidence" value="ECO:0000250"/>
    <property type="project" value="UniProtKB"/>
</dbReference>
<dbReference type="GO" id="GO:0043547">
    <property type="term" value="P:positive regulation of GTPase activity"/>
    <property type="evidence" value="ECO:0000250"/>
    <property type="project" value="UniProtKB"/>
</dbReference>
<dbReference type="CDD" id="cd04038">
    <property type="entry name" value="C2_ArfGAP"/>
    <property type="match status" value="1"/>
</dbReference>
<dbReference type="Gene3D" id="2.60.40.150">
    <property type="entry name" value="C2 domain"/>
    <property type="match status" value="1"/>
</dbReference>
<dbReference type="InterPro" id="IPR000008">
    <property type="entry name" value="C2_dom"/>
</dbReference>
<dbReference type="InterPro" id="IPR035892">
    <property type="entry name" value="C2_domain_sf"/>
</dbReference>
<dbReference type="InterPro" id="IPR044562">
    <property type="entry name" value="CAR1-11"/>
</dbReference>
<dbReference type="PANTHER" id="PTHR45933:SF29">
    <property type="entry name" value="PROTEIN C2-DOMAIN ABA-RELATED 10"/>
    <property type="match status" value="1"/>
</dbReference>
<dbReference type="PANTHER" id="PTHR45933">
    <property type="entry name" value="PROTEIN C2-DOMAIN ABA-RELATED 4"/>
    <property type="match status" value="1"/>
</dbReference>
<dbReference type="Pfam" id="PF00168">
    <property type="entry name" value="C2"/>
    <property type="match status" value="1"/>
</dbReference>
<dbReference type="SMART" id="SM00239">
    <property type="entry name" value="C2"/>
    <property type="match status" value="1"/>
</dbReference>
<dbReference type="SUPFAM" id="SSF49562">
    <property type="entry name" value="C2 domain (Calcium/lipid-binding domain, CaLB)"/>
    <property type="match status" value="1"/>
</dbReference>
<dbReference type="PROSITE" id="PS50004">
    <property type="entry name" value="C2"/>
    <property type="match status" value="1"/>
</dbReference>
<protein>
    <recommendedName>
        <fullName evidence="4">Protein C2-DOMAIN ABA-RELATED 10</fullName>
    </recommendedName>
</protein>